<dbReference type="EC" id="7.1.1.9"/>
<dbReference type="EMBL" id="X04764">
    <property type="protein sequence ID" value="CAA28459.1"/>
    <property type="molecule type" value="Genomic_DNA"/>
</dbReference>
<dbReference type="PIR" id="B26170">
    <property type="entry name" value="OTOB3M"/>
</dbReference>
<dbReference type="SMR" id="P08745"/>
<dbReference type="GO" id="GO:0005743">
    <property type="term" value="C:mitochondrial inner membrane"/>
    <property type="evidence" value="ECO:0007669"/>
    <property type="project" value="UniProtKB-SubCell"/>
</dbReference>
<dbReference type="GO" id="GO:0004129">
    <property type="term" value="F:cytochrome-c oxidase activity"/>
    <property type="evidence" value="ECO:0007669"/>
    <property type="project" value="UniProtKB-EC"/>
</dbReference>
<dbReference type="GO" id="GO:0006123">
    <property type="term" value="P:mitochondrial electron transport, cytochrome c to oxygen"/>
    <property type="evidence" value="ECO:0007669"/>
    <property type="project" value="TreeGrafter"/>
</dbReference>
<dbReference type="CDD" id="cd01665">
    <property type="entry name" value="Cyt_c_Oxidase_III"/>
    <property type="match status" value="1"/>
</dbReference>
<dbReference type="FunFam" id="1.10.287.70:FF:000075">
    <property type="entry name" value="Cytochrome c oxidase subunit 3"/>
    <property type="match status" value="1"/>
</dbReference>
<dbReference type="FunFam" id="1.20.120.80:FF:000002">
    <property type="entry name" value="Cytochrome c oxidase subunit 3"/>
    <property type="match status" value="1"/>
</dbReference>
<dbReference type="Gene3D" id="1.10.287.70">
    <property type="match status" value="1"/>
</dbReference>
<dbReference type="Gene3D" id="1.20.120.80">
    <property type="entry name" value="Cytochrome c oxidase, subunit III, four-helix bundle"/>
    <property type="match status" value="1"/>
</dbReference>
<dbReference type="InterPro" id="IPR024791">
    <property type="entry name" value="Cyt_c/ubiquinol_Oxase_su3"/>
</dbReference>
<dbReference type="InterPro" id="IPR033945">
    <property type="entry name" value="Cyt_c_oxase_su3_dom"/>
</dbReference>
<dbReference type="InterPro" id="IPR000298">
    <property type="entry name" value="Cyt_c_oxidase-like_su3"/>
</dbReference>
<dbReference type="InterPro" id="IPR035973">
    <property type="entry name" value="Cyt_c_oxidase_su3-like_sf"/>
</dbReference>
<dbReference type="InterPro" id="IPR013833">
    <property type="entry name" value="Cyt_c_oxidase_su3_a-hlx"/>
</dbReference>
<dbReference type="PANTHER" id="PTHR11403:SF7">
    <property type="entry name" value="CYTOCHROME C OXIDASE SUBUNIT 3"/>
    <property type="match status" value="1"/>
</dbReference>
<dbReference type="PANTHER" id="PTHR11403">
    <property type="entry name" value="CYTOCHROME C OXIDASE SUBUNIT III"/>
    <property type="match status" value="1"/>
</dbReference>
<dbReference type="Pfam" id="PF00510">
    <property type="entry name" value="COX3"/>
    <property type="match status" value="1"/>
</dbReference>
<dbReference type="SUPFAM" id="SSF81452">
    <property type="entry name" value="Cytochrome c oxidase subunit III-like"/>
    <property type="match status" value="1"/>
</dbReference>
<dbReference type="PROSITE" id="PS50253">
    <property type="entry name" value="COX3"/>
    <property type="match status" value="1"/>
</dbReference>
<keyword id="KW-0472">Membrane</keyword>
<keyword id="KW-0496">Mitochondrion</keyword>
<keyword id="KW-0999">Mitochondrion inner membrane</keyword>
<keyword id="KW-1278">Translocase</keyword>
<keyword id="KW-0812">Transmembrane</keyword>
<keyword id="KW-1133">Transmembrane helix</keyword>
<comment type="function">
    <text evidence="1">Component of the cytochrome c oxidase, the last enzyme in the mitochondrial electron transport chain which drives oxidative phosphorylation. The respiratory chain contains 3 multisubunit complexes succinate dehydrogenase (complex II, CII), ubiquinol-cytochrome c oxidoreductase (cytochrome b-c1 complex, complex III, CIII) and cytochrome c oxidase (complex IV, CIV), that cooperate to transfer electrons derived from NADH and succinate to molecular oxygen, creating an electrochemical gradient over the inner membrane that drives transmembrane transport and the ATP synthase. Cytochrome c oxidase is the component of the respiratory chain that catalyzes the reduction of oxygen to water. Electrons originating from reduced cytochrome c in the intermembrane space (IMS) are transferred via the dinuclear copper A center (CU(A)) of subunit 2 and heme A of subunit 1 to the active site in subunit 1, a binuclear center (BNC) formed by heme A3 and copper B (CU(B)). The BNC reduces molecular oxygen to 2 water molecules using 4 electrons from cytochrome c in the IMS and 4 protons from the mitochondrial matrix.</text>
</comment>
<comment type="catalytic activity">
    <reaction evidence="1">
        <text>4 Fe(II)-[cytochrome c] + O2 + 8 H(+)(in) = 4 Fe(III)-[cytochrome c] + 2 H2O + 4 H(+)(out)</text>
        <dbReference type="Rhea" id="RHEA:11436"/>
        <dbReference type="Rhea" id="RHEA-COMP:10350"/>
        <dbReference type="Rhea" id="RHEA-COMP:14399"/>
        <dbReference type="ChEBI" id="CHEBI:15377"/>
        <dbReference type="ChEBI" id="CHEBI:15378"/>
        <dbReference type="ChEBI" id="CHEBI:15379"/>
        <dbReference type="ChEBI" id="CHEBI:29033"/>
        <dbReference type="ChEBI" id="CHEBI:29034"/>
        <dbReference type="EC" id="7.1.1.9"/>
    </reaction>
    <physiologicalReaction direction="left-to-right" evidence="1">
        <dbReference type="Rhea" id="RHEA:11437"/>
    </physiologicalReaction>
</comment>
<comment type="subunit">
    <text evidence="1">Component of the cytochrome c oxidase (complex IV, CIV), a multisubunit enzyme composed of a catalytic core of 3 subunits and several supernumerary subunits. The complex exists as a monomer or a dimer and forms supercomplexes (SCs) in the inner mitochondrial membrane with ubiquinol-cytochrome c oxidoreductase (cytochrome b-c1 complex, complex III, CIII).</text>
</comment>
<comment type="subcellular location">
    <subcellularLocation>
        <location evidence="1">Mitochondrion inner membrane</location>
        <topology evidence="1">Multi-pass membrane protein</topology>
    </subcellularLocation>
</comment>
<comment type="similarity">
    <text evidence="3">Belongs to the cytochrome c oxidase subunit 3 family.</text>
</comment>
<sequence length="265" mass="29527">MIESQRHSYHLVDPSPWPISGSLGALATTVGGVMYMHPFQGGATLLSLGLIFLLYTMFVWWRDVLRESTLEGHHTKVVQLGLRYGSILFIVSEVMFLFAFFWASSHSSLAPTVEIGGIWPPKGIGVLDPWEIPFLNTPILLSSGAAVTWAHHAILAGKEKRAVYALVATVSLAIVFTGFQGMEYYQAPPTISDSIYGSTFYLATGFHGFHVIIGTLFSIICGIRQYLGHLTKEHHVGFEAAAWYWHFVDVVRLFLFVSIYWWGGI</sequence>
<protein>
    <recommendedName>
        <fullName>Cytochrome c oxidase subunit 3</fullName>
        <ecNumber>7.1.1.9</ecNumber>
    </recommendedName>
    <alternativeName>
        <fullName>Cytochrome c oxidase polypeptide III</fullName>
    </alternativeName>
</protein>
<evidence type="ECO:0000250" key="1">
    <source>
        <dbReference type="UniProtKB" id="P00420"/>
    </source>
</evidence>
<evidence type="ECO:0000255" key="2"/>
<evidence type="ECO:0000305" key="3"/>
<gene>
    <name type="primary">COX3</name>
    <name type="synonym">COXIII</name>
</gene>
<proteinExistence type="inferred from homology"/>
<feature type="chain" id="PRO_0000183815" description="Cytochrome c oxidase subunit 3">
    <location>
        <begin position="1"/>
        <end position="265"/>
    </location>
</feature>
<feature type="transmembrane region" description="Helical" evidence="2">
    <location>
        <begin position="16"/>
        <end position="36"/>
    </location>
</feature>
<feature type="transmembrane region" description="Helical" evidence="2">
    <location>
        <begin position="41"/>
        <end position="61"/>
    </location>
</feature>
<feature type="transmembrane region" description="Helical" evidence="2">
    <location>
        <begin position="84"/>
        <end position="104"/>
    </location>
</feature>
<feature type="transmembrane region" description="Helical" evidence="2">
    <location>
        <begin position="137"/>
        <end position="157"/>
    </location>
</feature>
<feature type="transmembrane region" description="Helical" evidence="2">
    <location>
        <begin position="162"/>
        <end position="182"/>
    </location>
</feature>
<feature type="transmembrane region" description="Helical" evidence="2">
    <location>
        <begin position="200"/>
        <end position="220"/>
    </location>
</feature>
<feature type="transmembrane region" description="Helical" evidence="2">
    <location>
        <begin position="245"/>
        <end position="265"/>
    </location>
</feature>
<feature type="sequence conflict" description="In Ref. 1; CAA28459." evidence="3" ref="1">
    <original>W</original>
    <variation>R</variation>
    <location>
        <position position="102"/>
    </location>
</feature>
<reference key="1">
    <citation type="journal article" date="1987" name="EMBO J.">
        <title>The cytochrome oxidase subunit I and subunit III genes in Oenothera mitochondria are transcribed from identical promoter sequences.</title>
        <authorList>
            <person name="Hiesel R."/>
            <person name="Schobel W."/>
            <person name="Schuster W."/>
            <person name="Brennicke A."/>
        </authorList>
    </citation>
    <scope>NUCLEOTIDE SEQUENCE [GENOMIC DNA]</scope>
    <source>
        <strain>cv. Munzia</strain>
    </source>
</reference>
<organism>
    <name type="scientific">Oenothera berteroana</name>
    <name type="common">Bertero's evening primrose</name>
    <dbReference type="NCBI Taxonomy" id="3950"/>
    <lineage>
        <taxon>Eukaryota</taxon>
        <taxon>Viridiplantae</taxon>
        <taxon>Streptophyta</taxon>
        <taxon>Embryophyta</taxon>
        <taxon>Tracheophyta</taxon>
        <taxon>Spermatophyta</taxon>
        <taxon>Magnoliopsida</taxon>
        <taxon>eudicotyledons</taxon>
        <taxon>Gunneridae</taxon>
        <taxon>Pentapetalae</taxon>
        <taxon>rosids</taxon>
        <taxon>malvids</taxon>
        <taxon>Myrtales</taxon>
        <taxon>Onagraceae</taxon>
        <taxon>Onagroideae</taxon>
        <taxon>Onagreae</taxon>
        <taxon>Oenothera</taxon>
    </lineage>
</organism>
<name>COX3_OENBE</name>
<geneLocation type="mitochondrion"/>
<accession>P08745</accession>